<organism>
    <name type="scientific">Yersinia pseudotuberculosis serotype O:3 (strain YPIII)</name>
    <dbReference type="NCBI Taxonomy" id="502800"/>
    <lineage>
        <taxon>Bacteria</taxon>
        <taxon>Pseudomonadati</taxon>
        <taxon>Pseudomonadota</taxon>
        <taxon>Gammaproteobacteria</taxon>
        <taxon>Enterobacterales</taxon>
        <taxon>Yersiniaceae</taxon>
        <taxon>Yersinia</taxon>
    </lineage>
</organism>
<reference key="1">
    <citation type="submission" date="2008-02" db="EMBL/GenBank/DDBJ databases">
        <title>Complete sequence of Yersinia pseudotuberculosis YPIII.</title>
        <authorList>
            <consortium name="US DOE Joint Genome Institute"/>
            <person name="Copeland A."/>
            <person name="Lucas S."/>
            <person name="Lapidus A."/>
            <person name="Glavina del Rio T."/>
            <person name="Dalin E."/>
            <person name="Tice H."/>
            <person name="Bruce D."/>
            <person name="Goodwin L."/>
            <person name="Pitluck S."/>
            <person name="Munk A.C."/>
            <person name="Brettin T."/>
            <person name="Detter J.C."/>
            <person name="Han C."/>
            <person name="Tapia R."/>
            <person name="Schmutz J."/>
            <person name="Larimer F."/>
            <person name="Land M."/>
            <person name="Hauser L."/>
            <person name="Challacombe J.F."/>
            <person name="Green L."/>
            <person name="Lindler L.E."/>
            <person name="Nikolich M.P."/>
            <person name="Richardson P."/>
        </authorList>
    </citation>
    <scope>NUCLEOTIDE SEQUENCE [LARGE SCALE GENOMIC DNA]</scope>
    <source>
        <strain>YPIII</strain>
    </source>
</reference>
<name>SYA_YERPY</name>
<keyword id="KW-0030">Aminoacyl-tRNA synthetase</keyword>
<keyword id="KW-0067">ATP-binding</keyword>
<keyword id="KW-0963">Cytoplasm</keyword>
<keyword id="KW-0436">Ligase</keyword>
<keyword id="KW-0479">Metal-binding</keyword>
<keyword id="KW-0547">Nucleotide-binding</keyword>
<keyword id="KW-0648">Protein biosynthesis</keyword>
<keyword id="KW-0694">RNA-binding</keyword>
<keyword id="KW-0820">tRNA-binding</keyword>
<keyword id="KW-0862">Zinc</keyword>
<protein>
    <recommendedName>
        <fullName evidence="1">Alanine--tRNA ligase</fullName>
        <ecNumber evidence="1">6.1.1.7</ecNumber>
    </recommendedName>
    <alternativeName>
        <fullName evidence="1">Alanyl-tRNA synthetase</fullName>
        <shortName evidence="1">AlaRS</shortName>
    </alternativeName>
</protein>
<sequence length="875" mass="96317">MSKSTAEIRQAFLDFFHSKGHQVVSSSSLVPNNDPTLLFTNAGMNQFKDVFLGLDKRAYSRATTSQRCVRAGGKHNDLENVGYTARHHTFFEMLGNFSFGDYFKHDAINFAWELLTSEQWFNLPKEKLWVTVYETDDEAYNIWANEVGVPHERIIRIGDNKGGAFASDNFWQMGDTGPCGPCSEIFFDHGDHIWGGPPGSAEEDGDRYIEIWNIVFMQFNRQSDGTMLPLPKPSVDTGMGLERIAAVLQHVNSNYEIDLFRDLIAAVADVTGATDLSSKSLRVIADHIRSCAFLISDGVIPSNENRGYVLRRIIRRAIRHGNMLGAKETFFYKLVAPLIAVMGPAAAELKQQQAMVEQVLKTEEEQFARTLERGLALLDDELSKLTGDTLDGETAFRLYDTYGFPVDLTADVCRERNLKVDEAGFEQAMEAQRRRARESSGFGADYNSLIRVDSASQFSGYDHVQQHATVTALFRNGEAVDEIHAGEEAVVVLNRTPFYGESGGQVGDKGELKNATATFSVTDTQKYGQAIGHVGILTTGTLRVNHSVEALVDVVRRNRIRLNHSATHLLHAALRNVLGEHVAQKGSLVNDKYLRFDFSHFEAMKPEQIRLVEDLVNEQIRRNMPVQTEVMELDAAKEKGAMALFGEKYDDQVRVLTMGDFSTELCGGTHASRTGDIGLFRILTESGTAAGIRRIEAVTGEGAIALLHQQSDLLQDVAHLVKGDIHNLADKVRAVLDRSKMLERELQQLKDQQAAQESASLSSSAKLINGVKLLVSQLDNVEPKMLRTMVDDLKNQLGSAIIVLATTADDKVSLIVGVTKDLTGKVKAGELIADIAQQVGGKGGGRPDMAQAGGTDVQALPAALASVEAWVASRM</sequence>
<dbReference type="EC" id="6.1.1.7" evidence="1"/>
<dbReference type="EMBL" id="CP000950">
    <property type="protein sequence ID" value="ACA69640.1"/>
    <property type="molecule type" value="Genomic_DNA"/>
</dbReference>
<dbReference type="RefSeq" id="WP_011191808.1">
    <property type="nucleotide sequence ID" value="NZ_CP009792.1"/>
</dbReference>
<dbReference type="SMR" id="B1JJA0"/>
<dbReference type="GeneID" id="49787166"/>
<dbReference type="KEGG" id="ypy:YPK_3373"/>
<dbReference type="PATRIC" id="fig|502800.11.peg.4109"/>
<dbReference type="GO" id="GO:0005829">
    <property type="term" value="C:cytosol"/>
    <property type="evidence" value="ECO:0007669"/>
    <property type="project" value="TreeGrafter"/>
</dbReference>
<dbReference type="GO" id="GO:0004813">
    <property type="term" value="F:alanine-tRNA ligase activity"/>
    <property type="evidence" value="ECO:0007669"/>
    <property type="project" value="UniProtKB-UniRule"/>
</dbReference>
<dbReference type="GO" id="GO:0002161">
    <property type="term" value="F:aminoacyl-tRNA deacylase activity"/>
    <property type="evidence" value="ECO:0007669"/>
    <property type="project" value="TreeGrafter"/>
</dbReference>
<dbReference type="GO" id="GO:0005524">
    <property type="term" value="F:ATP binding"/>
    <property type="evidence" value="ECO:0007669"/>
    <property type="project" value="UniProtKB-UniRule"/>
</dbReference>
<dbReference type="GO" id="GO:0000049">
    <property type="term" value="F:tRNA binding"/>
    <property type="evidence" value="ECO:0007669"/>
    <property type="project" value="UniProtKB-KW"/>
</dbReference>
<dbReference type="GO" id="GO:0008270">
    <property type="term" value="F:zinc ion binding"/>
    <property type="evidence" value="ECO:0007669"/>
    <property type="project" value="UniProtKB-UniRule"/>
</dbReference>
<dbReference type="GO" id="GO:0006419">
    <property type="term" value="P:alanyl-tRNA aminoacylation"/>
    <property type="evidence" value="ECO:0007669"/>
    <property type="project" value="UniProtKB-UniRule"/>
</dbReference>
<dbReference type="GO" id="GO:0045892">
    <property type="term" value="P:negative regulation of DNA-templated transcription"/>
    <property type="evidence" value="ECO:0007669"/>
    <property type="project" value="TreeGrafter"/>
</dbReference>
<dbReference type="CDD" id="cd00673">
    <property type="entry name" value="AlaRS_core"/>
    <property type="match status" value="1"/>
</dbReference>
<dbReference type="FunFam" id="2.40.30.130:FF:000001">
    <property type="entry name" value="Alanine--tRNA ligase"/>
    <property type="match status" value="1"/>
</dbReference>
<dbReference type="FunFam" id="3.10.310.40:FF:000001">
    <property type="entry name" value="Alanine--tRNA ligase"/>
    <property type="match status" value="1"/>
</dbReference>
<dbReference type="FunFam" id="3.30.54.20:FF:000001">
    <property type="entry name" value="Alanine--tRNA ligase"/>
    <property type="match status" value="1"/>
</dbReference>
<dbReference type="FunFam" id="3.30.930.10:FF:000004">
    <property type="entry name" value="Alanine--tRNA ligase"/>
    <property type="match status" value="1"/>
</dbReference>
<dbReference type="FunFam" id="3.30.980.10:FF:000004">
    <property type="entry name" value="Alanine--tRNA ligase, cytoplasmic"/>
    <property type="match status" value="1"/>
</dbReference>
<dbReference type="Gene3D" id="2.40.30.130">
    <property type="match status" value="1"/>
</dbReference>
<dbReference type="Gene3D" id="3.10.310.40">
    <property type="match status" value="1"/>
</dbReference>
<dbReference type="Gene3D" id="3.30.54.20">
    <property type="match status" value="1"/>
</dbReference>
<dbReference type="Gene3D" id="6.10.250.550">
    <property type="match status" value="1"/>
</dbReference>
<dbReference type="Gene3D" id="3.30.930.10">
    <property type="entry name" value="Bira Bifunctional Protein, Domain 2"/>
    <property type="match status" value="1"/>
</dbReference>
<dbReference type="Gene3D" id="3.30.980.10">
    <property type="entry name" value="Threonyl-trna Synthetase, Chain A, domain 2"/>
    <property type="match status" value="1"/>
</dbReference>
<dbReference type="HAMAP" id="MF_00036_B">
    <property type="entry name" value="Ala_tRNA_synth_B"/>
    <property type="match status" value="1"/>
</dbReference>
<dbReference type="InterPro" id="IPR045864">
    <property type="entry name" value="aa-tRNA-synth_II/BPL/LPL"/>
</dbReference>
<dbReference type="InterPro" id="IPR002318">
    <property type="entry name" value="Ala-tRNA-lgiase_IIc"/>
</dbReference>
<dbReference type="InterPro" id="IPR018162">
    <property type="entry name" value="Ala-tRNA-ligase_IIc_anticod-bd"/>
</dbReference>
<dbReference type="InterPro" id="IPR018165">
    <property type="entry name" value="Ala-tRNA-synth_IIc_core"/>
</dbReference>
<dbReference type="InterPro" id="IPR018164">
    <property type="entry name" value="Ala-tRNA-synth_IIc_N"/>
</dbReference>
<dbReference type="InterPro" id="IPR050058">
    <property type="entry name" value="Ala-tRNA_ligase"/>
</dbReference>
<dbReference type="InterPro" id="IPR023033">
    <property type="entry name" value="Ala_tRNA_ligase_euk/bac"/>
</dbReference>
<dbReference type="InterPro" id="IPR003156">
    <property type="entry name" value="DHHA1_dom"/>
</dbReference>
<dbReference type="InterPro" id="IPR018163">
    <property type="entry name" value="Thr/Ala-tRNA-synth_IIc_edit"/>
</dbReference>
<dbReference type="InterPro" id="IPR009000">
    <property type="entry name" value="Transl_B-barrel_sf"/>
</dbReference>
<dbReference type="InterPro" id="IPR012947">
    <property type="entry name" value="tRNA_SAD"/>
</dbReference>
<dbReference type="NCBIfam" id="TIGR00344">
    <property type="entry name" value="alaS"/>
    <property type="match status" value="1"/>
</dbReference>
<dbReference type="PANTHER" id="PTHR11777:SF9">
    <property type="entry name" value="ALANINE--TRNA LIGASE, CYTOPLASMIC"/>
    <property type="match status" value="1"/>
</dbReference>
<dbReference type="PANTHER" id="PTHR11777">
    <property type="entry name" value="ALANYL-TRNA SYNTHETASE"/>
    <property type="match status" value="1"/>
</dbReference>
<dbReference type="Pfam" id="PF02272">
    <property type="entry name" value="DHHA1"/>
    <property type="match status" value="1"/>
</dbReference>
<dbReference type="Pfam" id="PF01411">
    <property type="entry name" value="tRNA-synt_2c"/>
    <property type="match status" value="1"/>
</dbReference>
<dbReference type="Pfam" id="PF07973">
    <property type="entry name" value="tRNA_SAD"/>
    <property type="match status" value="1"/>
</dbReference>
<dbReference type="PRINTS" id="PR00980">
    <property type="entry name" value="TRNASYNTHALA"/>
</dbReference>
<dbReference type="SMART" id="SM00863">
    <property type="entry name" value="tRNA_SAD"/>
    <property type="match status" value="1"/>
</dbReference>
<dbReference type="SUPFAM" id="SSF55681">
    <property type="entry name" value="Class II aaRS and biotin synthetases"/>
    <property type="match status" value="1"/>
</dbReference>
<dbReference type="SUPFAM" id="SSF101353">
    <property type="entry name" value="Putative anticodon-binding domain of alanyl-tRNA synthetase (AlaRS)"/>
    <property type="match status" value="1"/>
</dbReference>
<dbReference type="SUPFAM" id="SSF55186">
    <property type="entry name" value="ThrRS/AlaRS common domain"/>
    <property type="match status" value="1"/>
</dbReference>
<dbReference type="SUPFAM" id="SSF50447">
    <property type="entry name" value="Translation proteins"/>
    <property type="match status" value="1"/>
</dbReference>
<dbReference type="PROSITE" id="PS50860">
    <property type="entry name" value="AA_TRNA_LIGASE_II_ALA"/>
    <property type="match status" value="1"/>
</dbReference>
<gene>
    <name evidence="1" type="primary">alaS</name>
    <name type="ordered locus">YPK_3373</name>
</gene>
<comment type="function">
    <text evidence="1">Catalyzes the attachment of alanine to tRNA(Ala) in a two-step reaction: alanine is first activated by ATP to form Ala-AMP and then transferred to the acceptor end of tRNA(Ala). Also edits incorrectly charged Ser-tRNA(Ala) and Gly-tRNA(Ala) via its editing domain.</text>
</comment>
<comment type="catalytic activity">
    <reaction evidence="1">
        <text>tRNA(Ala) + L-alanine + ATP = L-alanyl-tRNA(Ala) + AMP + diphosphate</text>
        <dbReference type="Rhea" id="RHEA:12540"/>
        <dbReference type="Rhea" id="RHEA-COMP:9657"/>
        <dbReference type="Rhea" id="RHEA-COMP:9923"/>
        <dbReference type="ChEBI" id="CHEBI:30616"/>
        <dbReference type="ChEBI" id="CHEBI:33019"/>
        <dbReference type="ChEBI" id="CHEBI:57972"/>
        <dbReference type="ChEBI" id="CHEBI:78442"/>
        <dbReference type="ChEBI" id="CHEBI:78497"/>
        <dbReference type="ChEBI" id="CHEBI:456215"/>
        <dbReference type="EC" id="6.1.1.7"/>
    </reaction>
</comment>
<comment type="cofactor">
    <cofactor evidence="1">
        <name>Zn(2+)</name>
        <dbReference type="ChEBI" id="CHEBI:29105"/>
    </cofactor>
    <text evidence="1">Binds 1 zinc ion per subunit.</text>
</comment>
<comment type="subunit">
    <text evidence="1">Homotetramer.</text>
</comment>
<comment type="subcellular location">
    <subcellularLocation>
        <location evidence="1">Cytoplasm</location>
    </subcellularLocation>
</comment>
<comment type="domain">
    <text evidence="1">Consists of three domains; the N-terminal catalytic domain, the editing domain and the C-terminal C-Ala domain. The editing domain removes incorrectly charged amino acids, while the C-Ala domain, along with tRNA(Ala), serves as a bridge to cooperatively bring together the editing and aminoacylation centers thus stimulating deacylation of misacylated tRNAs.</text>
</comment>
<comment type="similarity">
    <text evidence="1">Belongs to the class-II aminoacyl-tRNA synthetase family.</text>
</comment>
<feature type="chain" id="PRO_0000347876" description="Alanine--tRNA ligase">
    <location>
        <begin position="1"/>
        <end position="875"/>
    </location>
</feature>
<feature type="binding site" evidence="1">
    <location>
        <position position="564"/>
    </location>
    <ligand>
        <name>Zn(2+)</name>
        <dbReference type="ChEBI" id="CHEBI:29105"/>
    </ligand>
</feature>
<feature type="binding site" evidence="1">
    <location>
        <position position="568"/>
    </location>
    <ligand>
        <name>Zn(2+)</name>
        <dbReference type="ChEBI" id="CHEBI:29105"/>
    </ligand>
</feature>
<feature type="binding site" evidence="1">
    <location>
        <position position="666"/>
    </location>
    <ligand>
        <name>Zn(2+)</name>
        <dbReference type="ChEBI" id="CHEBI:29105"/>
    </ligand>
</feature>
<feature type="binding site" evidence="1">
    <location>
        <position position="670"/>
    </location>
    <ligand>
        <name>Zn(2+)</name>
        <dbReference type="ChEBI" id="CHEBI:29105"/>
    </ligand>
</feature>
<evidence type="ECO:0000255" key="1">
    <source>
        <dbReference type="HAMAP-Rule" id="MF_00036"/>
    </source>
</evidence>
<accession>B1JJA0</accession>
<proteinExistence type="inferred from homology"/>